<evidence type="ECO:0000255" key="1">
    <source>
        <dbReference type="HAMAP-Rule" id="MF_01317"/>
    </source>
</evidence>
<evidence type="ECO:0000305" key="2"/>
<comment type="function">
    <text evidence="1">One of the components of the core complex of photosystem II (PSII). PSII is a light-driven water:plastoquinone oxidoreductase that uses light energy to abstract electrons from H(2)O, generating O(2) and a proton gradient subsequently used for ATP formation. It consists of a core antenna complex that captures photons, and an electron transfer chain that converts photonic excitation into a charge separation. This subunit is found at the monomer-monomer interface and is required for correct PSII assembly and/or dimerization.</text>
</comment>
<comment type="subunit">
    <text evidence="2">PSII is composed of 1 copy each of membrane proteins PsbA, PsbB, PsbC, PsbD, PsbE, PsbF, PsbH, PsbI, PsbJ, PsbK, PsbL, PsbM, PsbT, PsbX, PsbY, Psb30/Ycf12, peripheral proteins PsbO, CyanoQ (PsbQ), PsbU, PsbV and a large number of cofactors. It forms dimeric complexes.</text>
</comment>
<comment type="subcellular location">
    <subcellularLocation>
        <location evidence="1">Cellular thylakoid membrane</location>
        <topology evidence="1">Single-pass membrane protein</topology>
    </subcellularLocation>
</comment>
<comment type="similarity">
    <text evidence="1">Belongs to the PsbL family.</text>
</comment>
<organism>
    <name type="scientific">Prochlorococcus marinus (strain MIT 9211)</name>
    <dbReference type="NCBI Taxonomy" id="93059"/>
    <lineage>
        <taxon>Bacteria</taxon>
        <taxon>Bacillati</taxon>
        <taxon>Cyanobacteriota</taxon>
        <taxon>Cyanophyceae</taxon>
        <taxon>Synechococcales</taxon>
        <taxon>Prochlorococcaceae</taxon>
        <taxon>Prochlorococcus</taxon>
    </lineage>
</organism>
<feature type="chain" id="PRO_1000141343" description="Photosystem II reaction center protein L">
    <location>
        <begin position="1"/>
        <end position="39"/>
    </location>
</feature>
<feature type="transmembrane region" description="Helical" evidence="1">
    <location>
        <begin position="18"/>
        <end position="38"/>
    </location>
</feature>
<dbReference type="EMBL" id="CP000878">
    <property type="protein sequence ID" value="ABX08256.1"/>
    <property type="molecule type" value="Genomic_DNA"/>
</dbReference>
<dbReference type="SMR" id="A9BDU6"/>
<dbReference type="STRING" id="93059.P9211_03251"/>
<dbReference type="KEGG" id="pmj:P9211_03251"/>
<dbReference type="eggNOG" id="ENOG5033AKP">
    <property type="taxonomic scope" value="Bacteria"/>
</dbReference>
<dbReference type="HOGENOM" id="CLU_214425_0_0_3"/>
<dbReference type="OrthoDB" id="560356at2"/>
<dbReference type="Proteomes" id="UP000000788">
    <property type="component" value="Chromosome"/>
</dbReference>
<dbReference type="GO" id="GO:0009539">
    <property type="term" value="C:photosystem II reaction center"/>
    <property type="evidence" value="ECO:0007669"/>
    <property type="project" value="InterPro"/>
</dbReference>
<dbReference type="GO" id="GO:0031676">
    <property type="term" value="C:plasma membrane-derived thylakoid membrane"/>
    <property type="evidence" value="ECO:0007669"/>
    <property type="project" value="UniProtKB-SubCell"/>
</dbReference>
<dbReference type="GO" id="GO:0015979">
    <property type="term" value="P:photosynthesis"/>
    <property type="evidence" value="ECO:0007669"/>
    <property type="project" value="UniProtKB-UniRule"/>
</dbReference>
<dbReference type="HAMAP" id="MF_01317">
    <property type="entry name" value="PSII_PsbL"/>
    <property type="match status" value="1"/>
</dbReference>
<dbReference type="InterPro" id="IPR003372">
    <property type="entry name" value="PSII_PsbL"/>
</dbReference>
<dbReference type="InterPro" id="IPR037266">
    <property type="entry name" value="PSII_PsbL_sf"/>
</dbReference>
<dbReference type="NCBIfam" id="NF001972">
    <property type="entry name" value="PRK00753.1"/>
    <property type="match status" value="1"/>
</dbReference>
<dbReference type="Pfam" id="PF02419">
    <property type="entry name" value="PsbL"/>
    <property type="match status" value="1"/>
</dbReference>
<dbReference type="SUPFAM" id="SSF161017">
    <property type="entry name" value="Photosystem II reaction center protein L, PsbL"/>
    <property type="match status" value="1"/>
</dbReference>
<gene>
    <name evidence="1" type="primary">psbL</name>
    <name type="ordered locus">P9211_03251</name>
</gene>
<proteinExistence type="inferred from homology"/>
<name>PSBL_PROM4</name>
<reference key="1">
    <citation type="journal article" date="2007" name="PLoS Genet.">
        <title>Patterns and implications of gene gain and loss in the evolution of Prochlorococcus.</title>
        <authorList>
            <person name="Kettler G.C."/>
            <person name="Martiny A.C."/>
            <person name="Huang K."/>
            <person name="Zucker J."/>
            <person name="Coleman M.L."/>
            <person name="Rodrigue S."/>
            <person name="Chen F."/>
            <person name="Lapidus A."/>
            <person name="Ferriera S."/>
            <person name="Johnson J."/>
            <person name="Steglich C."/>
            <person name="Church G.M."/>
            <person name="Richardson P."/>
            <person name="Chisholm S.W."/>
        </authorList>
    </citation>
    <scope>NUCLEOTIDE SEQUENCE [LARGE SCALE GENOMIC DNA]</scope>
    <source>
        <strain>MIT 9211</strain>
    </source>
</reference>
<protein>
    <recommendedName>
        <fullName evidence="1">Photosystem II reaction center protein L</fullName>
        <shortName evidence="1">PSII-L</shortName>
    </recommendedName>
</protein>
<accession>A9BDU6</accession>
<keyword id="KW-0472">Membrane</keyword>
<keyword id="KW-0602">Photosynthesis</keyword>
<keyword id="KW-0604">Photosystem II</keyword>
<keyword id="KW-0674">Reaction center</keyword>
<keyword id="KW-1185">Reference proteome</keyword>
<keyword id="KW-0793">Thylakoid</keyword>
<keyword id="KW-0812">Transmembrane</keyword>
<keyword id="KW-1133">Transmembrane helix</keyword>
<sequence>MQVNPNPNKLPVELNRTSLYLGLLLTFVMGILFSSYFFN</sequence>